<sequence length="508" mass="57333">MIDHLKRTKIIATCGPALTKSLVSLKMLDDNEYAAIKKVAYANIEAIIKSGVSVIRLNFSHGTHEEQQVRIKIVRDVAKAMNIPVSIMLDTNGPEIRIVETKKEGLKITKDSEVIINTMSKMIASDNQFAVSDASGKYNMVNDVNIGQKILVDDGKLTLVVTRVDKQHNQVICVAKNDHTVFTKKRLNLPNAQYSIPFLSEKDLKDIDFGLSQGIDYIAASFVNTVADIKQLRDYLKLKNASGVKIIAKIESNHALNNIDKIIKASDGIMVARGDLGLEIPYYQVPYWQRYMIKACRFFNKRSITATQMLDSLEKNIQPTRAEVTDVYFAVDRGNDATMLSGETASGLYPLNAVAVMQKIDKQSETFFDYQYNVNYYLKNSTANKSRFWHNVVLPLTKKTVPKRKLVNSAFKYDFIVYPTNNINRIYALSNARLAAAVIILTNNKRVYTGHGVDYGIFCYLIDKNPNQLTKAELIELAWKAINHYQAYGDLEKLKQCLAVYNETIINL</sequence>
<evidence type="ECO:0000250" key="1"/>
<evidence type="ECO:0000250" key="2">
    <source>
        <dbReference type="UniProtKB" id="P14618"/>
    </source>
</evidence>
<evidence type="ECO:0000305" key="3"/>
<protein>
    <recommendedName>
        <fullName>Pyruvate kinase</fullName>
        <shortName>PK</shortName>
        <ecNumber>2.7.1.40</ecNumber>
    </recommendedName>
</protein>
<name>KPYK_MYCGE</name>
<keyword id="KW-0021">Allosteric enzyme</keyword>
<keyword id="KW-0067">ATP-binding</keyword>
<keyword id="KW-0324">Glycolysis</keyword>
<keyword id="KW-0418">Kinase</keyword>
<keyword id="KW-0460">Magnesium</keyword>
<keyword id="KW-0479">Metal-binding</keyword>
<keyword id="KW-0547">Nucleotide-binding</keyword>
<keyword id="KW-0630">Potassium</keyword>
<keyword id="KW-0670">Pyruvate</keyword>
<keyword id="KW-1185">Reference proteome</keyword>
<keyword id="KW-0808">Transferase</keyword>
<proteinExistence type="inferred from homology"/>
<comment type="catalytic activity">
    <reaction>
        <text>pyruvate + ATP = phosphoenolpyruvate + ADP + H(+)</text>
        <dbReference type="Rhea" id="RHEA:18157"/>
        <dbReference type="ChEBI" id="CHEBI:15361"/>
        <dbReference type="ChEBI" id="CHEBI:15378"/>
        <dbReference type="ChEBI" id="CHEBI:30616"/>
        <dbReference type="ChEBI" id="CHEBI:58702"/>
        <dbReference type="ChEBI" id="CHEBI:456216"/>
        <dbReference type="EC" id="2.7.1.40"/>
    </reaction>
</comment>
<comment type="cofactor">
    <cofactor>
        <name>Mg(2+)</name>
        <dbReference type="ChEBI" id="CHEBI:18420"/>
    </cofactor>
</comment>
<comment type="cofactor">
    <cofactor>
        <name>K(+)</name>
        <dbReference type="ChEBI" id="CHEBI:29103"/>
    </cofactor>
</comment>
<comment type="activity regulation">
    <text evidence="1">Regulated by phosphoenolpyruvate substrate and is allosterically activated by ribose-5-phosphate, AMP and other nucleoside monophosphates but not by fructose-1,6-bisphosphate.</text>
</comment>
<comment type="pathway">
    <text>Carbohydrate degradation; glycolysis; pyruvate from D-glyceraldehyde 3-phosphate: step 5/5.</text>
</comment>
<comment type="subunit">
    <text evidence="1">Homotetramer.</text>
</comment>
<comment type="similarity">
    <text evidence="3">Belongs to the pyruvate kinase family.</text>
</comment>
<dbReference type="EC" id="2.7.1.40"/>
<dbReference type="EMBL" id="L43967">
    <property type="protein sequence ID" value="AAC71435.1"/>
    <property type="molecule type" value="Genomic_DNA"/>
</dbReference>
<dbReference type="EMBL" id="U01798">
    <property type="protein sequence ID" value="AAD12324.1"/>
    <property type="molecule type" value="Genomic_DNA"/>
</dbReference>
<dbReference type="PIR" id="H64223">
    <property type="entry name" value="H64223"/>
</dbReference>
<dbReference type="RefSeq" id="WP_009885755.1">
    <property type="nucleotide sequence ID" value="NC_000908.2"/>
</dbReference>
<dbReference type="SMR" id="P47458"/>
<dbReference type="FunCoup" id="P47458">
    <property type="interactions" value="136"/>
</dbReference>
<dbReference type="STRING" id="243273.MG_216"/>
<dbReference type="GeneID" id="88282351"/>
<dbReference type="KEGG" id="mge:MG_216"/>
<dbReference type="eggNOG" id="COG0469">
    <property type="taxonomic scope" value="Bacteria"/>
</dbReference>
<dbReference type="HOGENOM" id="CLU_015439_1_0_14"/>
<dbReference type="InParanoid" id="P47458"/>
<dbReference type="OrthoDB" id="9812123at2"/>
<dbReference type="BioCyc" id="MGEN243273:G1GJ2-252-MONOMER"/>
<dbReference type="UniPathway" id="UPA00109">
    <property type="reaction ID" value="UER00188"/>
</dbReference>
<dbReference type="Proteomes" id="UP000000807">
    <property type="component" value="Chromosome"/>
</dbReference>
<dbReference type="GO" id="GO:0005737">
    <property type="term" value="C:cytoplasm"/>
    <property type="evidence" value="ECO:0000318"/>
    <property type="project" value="GO_Central"/>
</dbReference>
<dbReference type="GO" id="GO:0005829">
    <property type="term" value="C:cytosol"/>
    <property type="evidence" value="ECO:0000318"/>
    <property type="project" value="GO_Central"/>
</dbReference>
<dbReference type="GO" id="GO:0005524">
    <property type="term" value="F:ATP binding"/>
    <property type="evidence" value="ECO:0007669"/>
    <property type="project" value="UniProtKB-KW"/>
</dbReference>
<dbReference type="GO" id="GO:0016301">
    <property type="term" value="F:kinase activity"/>
    <property type="evidence" value="ECO:0007669"/>
    <property type="project" value="UniProtKB-KW"/>
</dbReference>
<dbReference type="GO" id="GO:0000287">
    <property type="term" value="F:magnesium ion binding"/>
    <property type="evidence" value="ECO:0007669"/>
    <property type="project" value="InterPro"/>
</dbReference>
<dbReference type="GO" id="GO:0030955">
    <property type="term" value="F:potassium ion binding"/>
    <property type="evidence" value="ECO:0007669"/>
    <property type="project" value="InterPro"/>
</dbReference>
<dbReference type="GO" id="GO:0004743">
    <property type="term" value="F:pyruvate kinase activity"/>
    <property type="evidence" value="ECO:0000318"/>
    <property type="project" value="GO_Central"/>
</dbReference>
<dbReference type="GO" id="GO:0006096">
    <property type="term" value="P:glycolytic process"/>
    <property type="evidence" value="ECO:0000318"/>
    <property type="project" value="GO_Central"/>
</dbReference>
<dbReference type="Gene3D" id="3.20.20.60">
    <property type="entry name" value="Phosphoenolpyruvate-binding domains"/>
    <property type="match status" value="1"/>
</dbReference>
<dbReference type="Gene3D" id="2.40.33.10">
    <property type="entry name" value="PK beta-barrel domain-like"/>
    <property type="match status" value="1"/>
</dbReference>
<dbReference type="Gene3D" id="3.40.1380.20">
    <property type="entry name" value="Pyruvate kinase, C-terminal domain"/>
    <property type="match status" value="1"/>
</dbReference>
<dbReference type="InterPro" id="IPR001697">
    <property type="entry name" value="Pyr_Knase"/>
</dbReference>
<dbReference type="InterPro" id="IPR015813">
    <property type="entry name" value="Pyrv/PenolPyrv_kinase-like_dom"/>
</dbReference>
<dbReference type="InterPro" id="IPR040442">
    <property type="entry name" value="Pyrv_kinase-like_dom_sf"/>
</dbReference>
<dbReference type="InterPro" id="IPR011037">
    <property type="entry name" value="Pyrv_Knase-like_insert_dom_sf"/>
</dbReference>
<dbReference type="InterPro" id="IPR018209">
    <property type="entry name" value="Pyrv_Knase_AS"/>
</dbReference>
<dbReference type="InterPro" id="IPR015793">
    <property type="entry name" value="Pyrv_Knase_brl"/>
</dbReference>
<dbReference type="InterPro" id="IPR036918">
    <property type="entry name" value="Pyrv_Knase_C_sf"/>
</dbReference>
<dbReference type="InterPro" id="IPR015806">
    <property type="entry name" value="Pyrv_Knase_insert_dom_sf"/>
</dbReference>
<dbReference type="NCBIfam" id="NF004491">
    <property type="entry name" value="PRK05826.1"/>
    <property type="match status" value="1"/>
</dbReference>
<dbReference type="NCBIfam" id="TIGR01064">
    <property type="entry name" value="pyruv_kin"/>
    <property type="match status" value="1"/>
</dbReference>
<dbReference type="PANTHER" id="PTHR11817">
    <property type="entry name" value="PYRUVATE KINASE"/>
    <property type="match status" value="1"/>
</dbReference>
<dbReference type="Pfam" id="PF00224">
    <property type="entry name" value="PK"/>
    <property type="match status" value="1"/>
</dbReference>
<dbReference type="PRINTS" id="PR01050">
    <property type="entry name" value="PYRUVTKNASE"/>
</dbReference>
<dbReference type="SUPFAM" id="SSF51621">
    <property type="entry name" value="Phosphoenolpyruvate/pyruvate domain"/>
    <property type="match status" value="1"/>
</dbReference>
<dbReference type="SUPFAM" id="SSF50800">
    <property type="entry name" value="PK beta-barrel domain-like"/>
    <property type="match status" value="1"/>
</dbReference>
<dbReference type="SUPFAM" id="SSF52935">
    <property type="entry name" value="PK C-terminal domain-like"/>
    <property type="match status" value="1"/>
</dbReference>
<dbReference type="PROSITE" id="PS00110">
    <property type="entry name" value="PYRUVATE_KINASE"/>
    <property type="match status" value="1"/>
</dbReference>
<feature type="chain" id="PRO_0000112079" description="Pyruvate kinase">
    <location>
        <begin position="1"/>
        <end position="508"/>
    </location>
</feature>
<feature type="binding site" evidence="1">
    <location>
        <position position="56"/>
    </location>
    <ligand>
        <name>substrate</name>
    </ligand>
</feature>
<feature type="binding site" evidence="2">
    <location>
        <begin position="58"/>
        <end position="61"/>
    </location>
    <ligand>
        <name>ATP</name>
        <dbReference type="ChEBI" id="CHEBI:30616"/>
    </ligand>
</feature>
<feature type="binding site" evidence="1">
    <location>
        <position position="58"/>
    </location>
    <ligand>
        <name>K(+)</name>
        <dbReference type="ChEBI" id="CHEBI:29103"/>
    </ligand>
</feature>
<feature type="binding site" evidence="1">
    <location>
        <position position="60"/>
    </location>
    <ligand>
        <name>K(+)</name>
        <dbReference type="ChEBI" id="CHEBI:29103"/>
    </ligand>
</feature>
<feature type="binding site" evidence="1">
    <location>
        <position position="90"/>
    </location>
    <ligand>
        <name>K(+)</name>
        <dbReference type="ChEBI" id="CHEBI:29103"/>
    </ligand>
</feature>
<feature type="binding site" evidence="1">
    <location>
        <position position="91"/>
    </location>
    <ligand>
        <name>K(+)</name>
        <dbReference type="ChEBI" id="CHEBI:29103"/>
    </ligand>
</feature>
<feature type="binding site" evidence="2">
    <location>
        <position position="97"/>
    </location>
    <ligand>
        <name>ATP</name>
        <dbReference type="ChEBI" id="CHEBI:30616"/>
    </ligand>
</feature>
<feature type="binding site" evidence="2">
    <location>
        <position position="185"/>
    </location>
    <ligand>
        <name>ATP</name>
        <dbReference type="ChEBI" id="CHEBI:30616"/>
    </ligand>
</feature>
<feature type="binding site" evidence="1">
    <location>
        <position position="251"/>
    </location>
    <ligand>
        <name>Mg(2+)</name>
        <dbReference type="ChEBI" id="CHEBI:18420"/>
    </ligand>
</feature>
<feature type="binding site" evidence="1">
    <location>
        <position position="274"/>
    </location>
    <ligand>
        <name>substrate</name>
    </ligand>
</feature>
<feature type="binding site" evidence="1">
    <location>
        <position position="275"/>
    </location>
    <ligand>
        <name>Mg(2+)</name>
        <dbReference type="ChEBI" id="CHEBI:18420"/>
    </ligand>
</feature>
<feature type="binding site" evidence="1">
    <location>
        <position position="275"/>
    </location>
    <ligand>
        <name>substrate</name>
    </ligand>
</feature>
<feature type="binding site" evidence="1">
    <location>
        <position position="307"/>
    </location>
    <ligand>
        <name>substrate</name>
    </ligand>
</feature>
<feature type="site" description="Transition state stabilizer" evidence="1">
    <location>
        <position position="249"/>
    </location>
</feature>
<organism>
    <name type="scientific">Mycoplasma genitalium (strain ATCC 33530 / DSM 19775 / NCTC 10195 / G37)</name>
    <name type="common">Mycoplasmoides genitalium</name>
    <dbReference type="NCBI Taxonomy" id="243273"/>
    <lineage>
        <taxon>Bacteria</taxon>
        <taxon>Bacillati</taxon>
        <taxon>Mycoplasmatota</taxon>
        <taxon>Mycoplasmoidales</taxon>
        <taxon>Mycoplasmoidaceae</taxon>
        <taxon>Mycoplasmoides</taxon>
    </lineage>
</organism>
<gene>
    <name type="primary">pyk</name>
    <name type="ordered locus">MG216</name>
</gene>
<reference key="1">
    <citation type="journal article" date="1995" name="Science">
        <title>The minimal gene complement of Mycoplasma genitalium.</title>
        <authorList>
            <person name="Fraser C.M."/>
            <person name="Gocayne J.D."/>
            <person name="White O."/>
            <person name="Adams M.D."/>
            <person name="Clayton R.A."/>
            <person name="Fleischmann R.D."/>
            <person name="Bult C.J."/>
            <person name="Kerlavage A.R."/>
            <person name="Sutton G.G."/>
            <person name="Kelley J.M."/>
            <person name="Fritchman J.L."/>
            <person name="Weidman J.F."/>
            <person name="Small K.V."/>
            <person name="Sandusky M."/>
            <person name="Fuhrmann J.L."/>
            <person name="Nguyen D.T."/>
            <person name="Utterback T.R."/>
            <person name="Saudek D.M."/>
            <person name="Phillips C.A."/>
            <person name="Merrick J.M."/>
            <person name="Tomb J.-F."/>
            <person name="Dougherty B.A."/>
            <person name="Bott K.F."/>
            <person name="Hu P.-C."/>
            <person name="Lucier T.S."/>
            <person name="Peterson S.N."/>
            <person name="Smith H.O."/>
            <person name="Hutchison C.A. III"/>
            <person name="Venter J.C."/>
        </authorList>
    </citation>
    <scope>NUCLEOTIDE SEQUENCE [LARGE SCALE GENOMIC DNA]</scope>
    <source>
        <strain>ATCC 33530 / DSM 19775 / NCTC 10195 / G37</strain>
    </source>
</reference>
<reference key="2">
    <citation type="journal article" date="1993" name="J. Bacteriol.">
        <title>A survey of the Mycoplasma genitalium genome by using random sequencing.</title>
        <authorList>
            <person name="Peterson S.N."/>
            <person name="Hu P.-C."/>
            <person name="Bott K.F."/>
            <person name="Hutchison C.A. III"/>
        </authorList>
    </citation>
    <scope>NUCLEOTIDE SEQUENCE [GENOMIC DNA] OF 264-372</scope>
    <source>
        <strain>ATCC 33530 / DSM 19775 / NCTC 10195 / G37</strain>
    </source>
</reference>
<accession>P47458</accession>